<name>ZN345_HUMAN</name>
<sequence length="488" mass="55383">MENLTKHSIECSSFRGDWECKNQFERKQGSQEGHFSEMIFTPEDMPTFSIQHQRIHTDEKLLECKECGKDFSFVSVLVRHQRIHTGEKPYECKECGKAFGSGANLAYHQRIHTGEKPFECKECGKAFGSGSNLTHHQRIHTGEKPYECKECGKAFSFGSGLIRHQIIHSGEKPYECKECGKSFSFESALIRHHRIHTGEKPYECIDCGKAFGSGSNLTQHRRIHTGEKPYECKACGMAFSSGSALTRHQRIHTGEKPYICNECGKAFSFGSALTRHQRIHTGEKPYVCKECGKAFNSGSDLTQHQRIHTGEKPYECKECEKAFRSGSKLIQHQRMHTGEKPYECKECGKTFSSGSDLTQHHRIHTGEKPYECKECGKAFGSGSKLIQHQLIHTGERPYECKECGKSFSSGSALNRHQRIHTGEKPYECKECGKAFYSGSSLTQHQRIHTGEKLYECKNCGKAYGRDSEFQQHKKSHNGKKLCELETIN</sequence>
<reference key="1">
    <citation type="journal article" date="1995" name="DNA Cell Biol.">
        <title>Isolation of cDNA clones for 42 different Kruppel-related zinc finger proteins expressed in the human monoblast cell line U-937.</title>
        <authorList>
            <person name="Abrink M."/>
            <person name="Aveskogh M."/>
            <person name="Hellman L."/>
        </authorList>
    </citation>
    <scope>NUCLEOTIDE SEQUENCE [MRNA]</scope>
</reference>
<reference key="2">
    <citation type="journal article" date="2004" name="Genome Res.">
        <title>The status, quality, and expansion of the NIH full-length cDNA project: the Mammalian Gene Collection (MGC).</title>
        <authorList>
            <consortium name="The MGC Project Team"/>
        </authorList>
    </citation>
    <scope>NUCLEOTIDE SEQUENCE [LARGE SCALE MRNA]</scope>
    <source>
        <tissue>Testis</tissue>
    </source>
</reference>
<comment type="function">
    <text>May be involved in transcriptional regulation.</text>
</comment>
<comment type="interaction">
    <interactant intactId="EBI-2818408">
        <id>Q14585</id>
    </interactant>
    <interactant intactId="EBI-10976677">
        <id>G5E9A7</id>
        <label>DMWD</label>
    </interactant>
    <organismsDiffer>false</organismsDiffer>
    <experiments>3</experiments>
</comment>
<comment type="interaction">
    <interactant intactId="EBI-2818408">
        <id>Q14585</id>
    </interactant>
    <interactant intactId="EBI-743414">
        <id>O95967</id>
        <label>EFEMP2</label>
    </interactant>
    <organismsDiffer>false</organismsDiffer>
    <experiments>3</experiments>
</comment>
<comment type="interaction">
    <interactant intactId="EBI-2818408">
        <id>Q14585</id>
    </interactant>
    <interactant intactId="EBI-351935">
        <id>P02545</id>
        <label>LMNA</label>
    </interactant>
    <organismsDiffer>false</organismsDiffer>
    <experiments>3</experiments>
</comment>
<comment type="interaction">
    <interactant intactId="EBI-2818408">
        <id>Q14585</id>
    </interactant>
    <interactant intactId="EBI-395959">
        <id>Q15287</id>
        <label>RNPS1</label>
    </interactant>
    <organismsDiffer>false</organismsDiffer>
    <experiments>3</experiments>
</comment>
<comment type="interaction">
    <interactant intactId="EBI-2818408">
        <id>Q14585</id>
    </interactant>
    <interactant intactId="EBI-5235340">
        <id>Q7Z699</id>
        <label>SPRED1</label>
    </interactant>
    <organismsDiffer>false</organismsDiffer>
    <experiments>3</experiments>
</comment>
<comment type="interaction">
    <interactant intactId="EBI-2818408">
        <id>Q14585</id>
    </interactant>
    <interactant intactId="EBI-12806590">
        <id>Q86WV8</id>
        <label>TSC1</label>
    </interactant>
    <organismsDiffer>false</organismsDiffer>
    <experiments>3</experiments>
</comment>
<comment type="interaction">
    <interactant intactId="EBI-2818408">
        <id>Q14585</id>
    </interactant>
    <interactant intactId="EBI-10177272">
        <id>P15622-3</id>
        <label>ZNF250</label>
    </interactant>
    <organismsDiffer>false</organismsDiffer>
    <experiments>3</experiments>
</comment>
<comment type="subcellular location">
    <subcellularLocation>
        <location evidence="2">Nucleus</location>
    </subcellularLocation>
</comment>
<comment type="similarity">
    <text evidence="2">Belongs to the krueppel C2H2-type zinc-finger protein family.</text>
</comment>
<protein>
    <recommendedName>
        <fullName>Zinc finger protein 345</fullName>
    </recommendedName>
    <alternativeName>
        <fullName>Zinc finger protein HZF10</fullName>
    </alternativeName>
</protein>
<gene>
    <name type="primary">ZNF345</name>
</gene>
<keyword id="KW-0238">DNA-binding</keyword>
<keyword id="KW-0479">Metal-binding</keyword>
<keyword id="KW-0539">Nucleus</keyword>
<keyword id="KW-1267">Proteomics identification</keyword>
<keyword id="KW-1185">Reference proteome</keyword>
<keyword id="KW-0677">Repeat</keyword>
<keyword id="KW-0804">Transcription</keyword>
<keyword id="KW-0805">Transcription regulation</keyword>
<keyword id="KW-0862">Zinc</keyword>
<keyword id="KW-0863">Zinc-finger</keyword>
<proteinExistence type="evidence at protein level"/>
<organism>
    <name type="scientific">Homo sapiens</name>
    <name type="common">Human</name>
    <dbReference type="NCBI Taxonomy" id="9606"/>
    <lineage>
        <taxon>Eukaryota</taxon>
        <taxon>Metazoa</taxon>
        <taxon>Chordata</taxon>
        <taxon>Craniata</taxon>
        <taxon>Vertebrata</taxon>
        <taxon>Euteleostomi</taxon>
        <taxon>Mammalia</taxon>
        <taxon>Eutheria</taxon>
        <taxon>Euarchontoglires</taxon>
        <taxon>Primates</taxon>
        <taxon>Haplorrhini</taxon>
        <taxon>Catarrhini</taxon>
        <taxon>Hominidae</taxon>
        <taxon>Homo</taxon>
    </lineage>
</organism>
<evidence type="ECO:0000255" key="1">
    <source>
        <dbReference type="PROSITE-ProRule" id="PRU00042"/>
    </source>
</evidence>
<evidence type="ECO:0000305" key="2"/>
<dbReference type="EMBL" id="X78933">
    <property type="protein sequence ID" value="CAA55533.1"/>
    <property type="molecule type" value="mRNA"/>
</dbReference>
<dbReference type="EMBL" id="BC032863">
    <property type="protein sequence ID" value="AAH32863.1"/>
    <property type="molecule type" value="mRNA"/>
</dbReference>
<dbReference type="CCDS" id="CCDS12497.1"/>
<dbReference type="PIR" id="S47072">
    <property type="entry name" value="S47072"/>
</dbReference>
<dbReference type="RefSeq" id="NP_001229401.1">
    <property type="nucleotide sequence ID" value="NM_001242472.2"/>
</dbReference>
<dbReference type="RefSeq" id="NP_001229403.1">
    <property type="nucleotide sequence ID" value="NM_001242474.2"/>
</dbReference>
<dbReference type="RefSeq" id="NP_001229404.1">
    <property type="nucleotide sequence ID" value="NM_001242475.2"/>
</dbReference>
<dbReference type="RefSeq" id="NP_001229405.1">
    <property type="nucleotide sequence ID" value="NM_001242476.2"/>
</dbReference>
<dbReference type="RefSeq" id="NP_003410.1">
    <property type="nucleotide sequence ID" value="NM_003419.5"/>
</dbReference>
<dbReference type="RefSeq" id="XP_011525006.1">
    <property type="nucleotide sequence ID" value="XM_011526704.4"/>
</dbReference>
<dbReference type="RefSeq" id="XP_016882057.1">
    <property type="nucleotide sequence ID" value="XM_017026568.2"/>
</dbReference>
<dbReference type="RefSeq" id="XP_016882058.1">
    <property type="nucleotide sequence ID" value="XM_017026569.3"/>
</dbReference>
<dbReference type="RefSeq" id="XP_016882059.1">
    <property type="nucleotide sequence ID" value="XM_017026570.3"/>
</dbReference>
<dbReference type="RefSeq" id="XP_016882060.1">
    <property type="nucleotide sequence ID" value="XM_017026571.3"/>
</dbReference>
<dbReference type="RefSeq" id="XP_016882061.1">
    <property type="nucleotide sequence ID" value="XM_017026572.3"/>
</dbReference>
<dbReference type="RefSeq" id="XP_016882062.1">
    <property type="nucleotide sequence ID" value="XM_017026573.2"/>
</dbReference>
<dbReference type="RefSeq" id="XP_047294522.1">
    <property type="nucleotide sequence ID" value="XM_047438566.1"/>
</dbReference>
<dbReference type="SMR" id="Q14585"/>
<dbReference type="BioGRID" id="117374">
    <property type="interactions" value="6"/>
</dbReference>
<dbReference type="FunCoup" id="Q14585">
    <property type="interactions" value="741"/>
</dbReference>
<dbReference type="IntAct" id="Q14585">
    <property type="interactions" value="8"/>
</dbReference>
<dbReference type="STRING" id="9606.ENSP00000431202"/>
<dbReference type="iPTMnet" id="Q14585"/>
<dbReference type="PhosphoSitePlus" id="Q14585"/>
<dbReference type="BioMuta" id="ZNF345"/>
<dbReference type="DMDM" id="11136080"/>
<dbReference type="jPOST" id="Q14585"/>
<dbReference type="MassIVE" id="Q14585"/>
<dbReference type="PaxDb" id="9606-ENSP00000431202"/>
<dbReference type="PeptideAtlas" id="Q14585"/>
<dbReference type="ProteomicsDB" id="60058"/>
<dbReference type="Antibodypedia" id="47728">
    <property type="antibodies" value="85 antibodies from 12 providers"/>
</dbReference>
<dbReference type="DNASU" id="25850"/>
<dbReference type="Ensembl" id="ENST00000331800.9">
    <property type="protein sequence ID" value="ENSP00000331120.5"/>
    <property type="gene ID" value="ENSG00000251247.13"/>
</dbReference>
<dbReference type="Ensembl" id="ENST00000420450.6">
    <property type="protein sequence ID" value="ENSP00000431216.1"/>
    <property type="gene ID" value="ENSG00000251247.13"/>
</dbReference>
<dbReference type="Ensembl" id="ENST00000529555.1">
    <property type="protein sequence ID" value="ENSP00000431202.1"/>
    <property type="gene ID" value="ENSG00000251247.13"/>
</dbReference>
<dbReference type="Ensembl" id="ENST00000532141.6">
    <property type="protein sequence ID" value="ENSP00000431289.2"/>
    <property type="gene ID" value="ENSG00000251247.13"/>
</dbReference>
<dbReference type="Ensembl" id="ENST00000589046.1">
    <property type="protein sequence ID" value="ENSP00000465431.1"/>
    <property type="gene ID" value="ENSG00000251247.13"/>
</dbReference>
<dbReference type="GeneID" id="25850"/>
<dbReference type="KEGG" id="hsa:25850"/>
<dbReference type="MANE-Select" id="ENST00000420450.6">
    <property type="protein sequence ID" value="ENSP00000431216.1"/>
    <property type="RefSeq nucleotide sequence ID" value="NM_001242472.2"/>
    <property type="RefSeq protein sequence ID" value="NP_001229401.1"/>
</dbReference>
<dbReference type="UCSC" id="uc002oex.4">
    <property type="organism name" value="human"/>
</dbReference>
<dbReference type="AGR" id="HGNC:16367"/>
<dbReference type="CTD" id="25850"/>
<dbReference type="DisGeNET" id="25850"/>
<dbReference type="GeneCards" id="ZNF345"/>
<dbReference type="HGNC" id="HGNC:16367">
    <property type="gene designation" value="ZNF345"/>
</dbReference>
<dbReference type="HPA" id="ENSG00000251247">
    <property type="expression patterns" value="Low tissue specificity"/>
</dbReference>
<dbReference type="neXtProt" id="NX_Q14585"/>
<dbReference type="OpenTargets" id="ENSG00000251247"/>
<dbReference type="PharmGKB" id="PA38128"/>
<dbReference type="VEuPathDB" id="HostDB:ENSG00000251247"/>
<dbReference type="eggNOG" id="KOG1721">
    <property type="taxonomic scope" value="Eukaryota"/>
</dbReference>
<dbReference type="GeneTree" id="ENSGT00940000163308"/>
<dbReference type="HOGENOM" id="CLU_002678_0_2_1"/>
<dbReference type="InParanoid" id="Q14585"/>
<dbReference type="OMA" id="HRHFSEM"/>
<dbReference type="OrthoDB" id="6591996at2759"/>
<dbReference type="PAN-GO" id="Q14585">
    <property type="GO annotations" value="4 GO annotations based on evolutionary models"/>
</dbReference>
<dbReference type="PhylomeDB" id="Q14585"/>
<dbReference type="PathwayCommons" id="Q14585"/>
<dbReference type="SignaLink" id="Q14585"/>
<dbReference type="BioGRID-ORCS" id="25850">
    <property type="hits" value="18 hits in 1162 CRISPR screens"/>
</dbReference>
<dbReference type="ChiTaRS" id="ZNF345">
    <property type="organism name" value="human"/>
</dbReference>
<dbReference type="GenomeRNAi" id="25850"/>
<dbReference type="Pharos" id="Q14585">
    <property type="development level" value="Tdark"/>
</dbReference>
<dbReference type="PRO" id="PR:Q14585"/>
<dbReference type="Proteomes" id="UP000005640">
    <property type="component" value="Chromosome 19"/>
</dbReference>
<dbReference type="RNAct" id="Q14585">
    <property type="molecule type" value="protein"/>
</dbReference>
<dbReference type="Bgee" id="ENSG00000251247">
    <property type="expression patterns" value="Expressed in right testis and 118 other cell types or tissues"/>
</dbReference>
<dbReference type="ExpressionAtlas" id="Q14585">
    <property type="expression patterns" value="baseline and differential"/>
</dbReference>
<dbReference type="GO" id="GO:0005634">
    <property type="term" value="C:nucleus"/>
    <property type="evidence" value="ECO:0000318"/>
    <property type="project" value="GO_Central"/>
</dbReference>
<dbReference type="GO" id="GO:0001228">
    <property type="term" value="F:DNA-binding transcription activator activity, RNA polymerase II-specific"/>
    <property type="evidence" value="ECO:0000318"/>
    <property type="project" value="GO_Central"/>
</dbReference>
<dbReference type="GO" id="GO:0000978">
    <property type="term" value="F:RNA polymerase II cis-regulatory region sequence-specific DNA binding"/>
    <property type="evidence" value="ECO:0000318"/>
    <property type="project" value="GO_Central"/>
</dbReference>
<dbReference type="GO" id="GO:1990837">
    <property type="term" value="F:sequence-specific double-stranded DNA binding"/>
    <property type="evidence" value="ECO:0000314"/>
    <property type="project" value="ARUK-UCL"/>
</dbReference>
<dbReference type="GO" id="GO:0008270">
    <property type="term" value="F:zinc ion binding"/>
    <property type="evidence" value="ECO:0007669"/>
    <property type="project" value="UniProtKB-KW"/>
</dbReference>
<dbReference type="GO" id="GO:0000122">
    <property type="term" value="P:negative regulation of transcription by RNA polymerase II"/>
    <property type="evidence" value="ECO:0000304"/>
    <property type="project" value="ProtInc"/>
</dbReference>
<dbReference type="GO" id="GO:0006357">
    <property type="term" value="P:regulation of transcription by RNA polymerase II"/>
    <property type="evidence" value="ECO:0000318"/>
    <property type="project" value="GO_Central"/>
</dbReference>
<dbReference type="GO" id="GO:0006359">
    <property type="term" value="P:regulation of transcription by RNA polymerase III"/>
    <property type="evidence" value="ECO:0000304"/>
    <property type="project" value="ProtInc"/>
</dbReference>
<dbReference type="GO" id="GO:0006366">
    <property type="term" value="P:transcription by RNA polymerase II"/>
    <property type="evidence" value="ECO:0000304"/>
    <property type="project" value="ProtInc"/>
</dbReference>
<dbReference type="GO" id="GO:0006383">
    <property type="term" value="P:transcription by RNA polymerase III"/>
    <property type="evidence" value="ECO:0000304"/>
    <property type="project" value="ProtInc"/>
</dbReference>
<dbReference type="FunFam" id="3.30.160.60:FF:003349">
    <property type="entry name" value="RB associated KRAB zinc finger"/>
    <property type="match status" value="1"/>
</dbReference>
<dbReference type="FunFam" id="3.30.160.60:FF:000800">
    <property type="entry name" value="zinc finger protein 181 isoform X2"/>
    <property type="match status" value="2"/>
</dbReference>
<dbReference type="FunFam" id="3.30.160.60:FF:000295">
    <property type="entry name" value="zinc finger protein 19"/>
    <property type="match status" value="1"/>
</dbReference>
<dbReference type="FunFam" id="3.30.160.60:FF:002343">
    <property type="entry name" value="Zinc finger protein 33A"/>
    <property type="match status" value="1"/>
</dbReference>
<dbReference type="FunFam" id="3.30.160.60:FF:000016">
    <property type="entry name" value="zinc finger protein 37 homolog"/>
    <property type="match status" value="1"/>
</dbReference>
<dbReference type="FunFam" id="3.30.160.60:FF:001498">
    <property type="entry name" value="Zinc finger protein 404"/>
    <property type="match status" value="1"/>
</dbReference>
<dbReference type="FunFam" id="3.30.160.60:FF:001532">
    <property type="entry name" value="Zinc finger protein 483"/>
    <property type="match status" value="1"/>
</dbReference>
<dbReference type="FunFam" id="3.30.160.60:FF:002254">
    <property type="entry name" value="Zinc finger protein 540"/>
    <property type="match status" value="3"/>
</dbReference>
<dbReference type="FunFam" id="3.30.160.60:FF:000737">
    <property type="entry name" value="Zinc finger protein 565"/>
    <property type="match status" value="3"/>
</dbReference>
<dbReference type="FunFam" id="3.30.160.60:FF:001270">
    <property type="entry name" value="zinc finger protein 583 isoform X1"/>
    <property type="match status" value="1"/>
</dbReference>
<dbReference type="Gene3D" id="3.30.160.60">
    <property type="entry name" value="Classic Zinc Finger"/>
    <property type="match status" value="15"/>
</dbReference>
<dbReference type="InterPro" id="IPR036236">
    <property type="entry name" value="Znf_C2H2_sf"/>
</dbReference>
<dbReference type="InterPro" id="IPR013087">
    <property type="entry name" value="Znf_C2H2_type"/>
</dbReference>
<dbReference type="PANTHER" id="PTHR24394">
    <property type="entry name" value="ZINC FINGER PROTEIN"/>
    <property type="match status" value="1"/>
</dbReference>
<dbReference type="PANTHER" id="PTHR24394:SF48">
    <property type="entry name" value="ZINC FINGER PROTEIN 771"/>
    <property type="match status" value="1"/>
</dbReference>
<dbReference type="Pfam" id="PF00096">
    <property type="entry name" value="zf-C2H2"/>
    <property type="match status" value="11"/>
</dbReference>
<dbReference type="Pfam" id="PF13465">
    <property type="entry name" value="zf-H2C2_2"/>
    <property type="match status" value="2"/>
</dbReference>
<dbReference type="SMART" id="SM00355">
    <property type="entry name" value="ZnF_C2H2"/>
    <property type="match status" value="15"/>
</dbReference>
<dbReference type="SUPFAM" id="SSF57667">
    <property type="entry name" value="beta-beta-alpha zinc fingers"/>
    <property type="match status" value="8"/>
</dbReference>
<dbReference type="PROSITE" id="PS00028">
    <property type="entry name" value="ZINC_FINGER_C2H2_1"/>
    <property type="match status" value="15"/>
</dbReference>
<dbReference type="PROSITE" id="PS50157">
    <property type="entry name" value="ZINC_FINGER_C2H2_2"/>
    <property type="match status" value="15"/>
</dbReference>
<accession>Q14585</accession>
<feature type="chain" id="PRO_0000047544" description="Zinc finger protein 345">
    <location>
        <begin position="1"/>
        <end position="488"/>
    </location>
</feature>
<feature type="zinc finger region" description="C2H2-type 1" evidence="1">
    <location>
        <begin position="62"/>
        <end position="84"/>
    </location>
</feature>
<feature type="zinc finger region" description="C2H2-type 2" evidence="1">
    <location>
        <begin position="90"/>
        <end position="112"/>
    </location>
</feature>
<feature type="zinc finger region" description="C2H2-type 3" evidence="1">
    <location>
        <begin position="118"/>
        <end position="140"/>
    </location>
</feature>
<feature type="zinc finger region" description="C2H2-type 4" evidence="1">
    <location>
        <begin position="146"/>
        <end position="168"/>
    </location>
</feature>
<feature type="zinc finger region" description="C2H2-type 5" evidence="1">
    <location>
        <begin position="174"/>
        <end position="196"/>
    </location>
</feature>
<feature type="zinc finger region" description="C2H2-type 6" evidence="1">
    <location>
        <begin position="202"/>
        <end position="224"/>
    </location>
</feature>
<feature type="zinc finger region" description="C2H2-type 7" evidence="1">
    <location>
        <begin position="230"/>
        <end position="252"/>
    </location>
</feature>
<feature type="zinc finger region" description="C2H2-type 8" evidence="1">
    <location>
        <begin position="258"/>
        <end position="280"/>
    </location>
</feature>
<feature type="zinc finger region" description="C2H2-type 9" evidence="1">
    <location>
        <begin position="286"/>
        <end position="308"/>
    </location>
</feature>
<feature type="zinc finger region" description="C2H2-type 10" evidence="1">
    <location>
        <begin position="314"/>
        <end position="336"/>
    </location>
</feature>
<feature type="zinc finger region" description="C2H2-type 11" evidence="1">
    <location>
        <begin position="342"/>
        <end position="364"/>
    </location>
</feature>
<feature type="zinc finger region" description="C2H2-type 12" evidence="1">
    <location>
        <begin position="370"/>
        <end position="392"/>
    </location>
</feature>
<feature type="zinc finger region" description="C2H2-type 13" evidence="1">
    <location>
        <begin position="398"/>
        <end position="420"/>
    </location>
</feature>
<feature type="zinc finger region" description="C2H2-type 14" evidence="1">
    <location>
        <begin position="426"/>
        <end position="448"/>
    </location>
</feature>
<feature type="zinc finger region" description="C2H2-type 15" evidence="1">
    <location>
        <begin position="454"/>
        <end position="476"/>
    </location>
</feature>